<comment type="function">
    <text evidence="1">Catalyzes the specific phosphorylation of 1,6-anhydro-N-acetylmuramic acid (anhMurNAc) with the simultaneous cleavage of the 1,6-anhydro ring, generating MurNAc-6-P. Is required for the utilization of anhMurNAc either imported from the medium or derived from its own cell wall murein, and thus plays a role in cell wall recycling.</text>
</comment>
<comment type="catalytic activity">
    <reaction evidence="1">
        <text>1,6-anhydro-N-acetyl-beta-muramate + ATP + H2O = N-acetyl-D-muramate 6-phosphate + ADP + H(+)</text>
        <dbReference type="Rhea" id="RHEA:24952"/>
        <dbReference type="ChEBI" id="CHEBI:15377"/>
        <dbReference type="ChEBI" id="CHEBI:15378"/>
        <dbReference type="ChEBI" id="CHEBI:30616"/>
        <dbReference type="ChEBI" id="CHEBI:58690"/>
        <dbReference type="ChEBI" id="CHEBI:58722"/>
        <dbReference type="ChEBI" id="CHEBI:456216"/>
        <dbReference type="EC" id="2.7.1.170"/>
    </reaction>
</comment>
<comment type="pathway">
    <text evidence="1">Amino-sugar metabolism; 1,6-anhydro-N-acetylmuramate degradation.</text>
</comment>
<comment type="pathway">
    <text evidence="1">Cell wall biogenesis; peptidoglycan recycling.</text>
</comment>
<comment type="similarity">
    <text evidence="1">Belongs to the anhydro-N-acetylmuramic acid kinase family.</text>
</comment>
<dbReference type="EC" id="2.7.1.170" evidence="1"/>
<dbReference type="EMBL" id="AE005174">
    <property type="protein sequence ID" value="AAG56629.1"/>
    <property type="molecule type" value="Genomic_DNA"/>
</dbReference>
<dbReference type="EMBL" id="BA000007">
    <property type="protein sequence ID" value="BAB35772.1"/>
    <property type="molecule type" value="Genomic_DNA"/>
</dbReference>
<dbReference type="PIR" id="A85771">
    <property type="entry name" value="A85771"/>
</dbReference>
<dbReference type="PIR" id="E90922">
    <property type="entry name" value="E90922"/>
</dbReference>
<dbReference type="RefSeq" id="NP_310376.1">
    <property type="nucleotide sequence ID" value="NC_002695.1"/>
</dbReference>
<dbReference type="RefSeq" id="WP_000835042.1">
    <property type="nucleotide sequence ID" value="NZ_SEKU01000008.1"/>
</dbReference>
<dbReference type="SMR" id="Q8X644"/>
<dbReference type="STRING" id="155864.Z2654"/>
<dbReference type="GeneID" id="912430"/>
<dbReference type="KEGG" id="ece:Z2654"/>
<dbReference type="KEGG" id="ecs:ECs_2349"/>
<dbReference type="PATRIC" id="fig|386585.9.peg.2458"/>
<dbReference type="eggNOG" id="COG2377">
    <property type="taxonomic scope" value="Bacteria"/>
</dbReference>
<dbReference type="HOGENOM" id="CLU_038782_0_0_6"/>
<dbReference type="OMA" id="TGPGNMV"/>
<dbReference type="UniPathway" id="UPA00343"/>
<dbReference type="UniPathway" id="UPA00544"/>
<dbReference type="Proteomes" id="UP000000558">
    <property type="component" value="Chromosome"/>
</dbReference>
<dbReference type="Proteomes" id="UP000002519">
    <property type="component" value="Chromosome"/>
</dbReference>
<dbReference type="GO" id="GO:0005524">
    <property type="term" value="F:ATP binding"/>
    <property type="evidence" value="ECO:0007669"/>
    <property type="project" value="UniProtKB-UniRule"/>
</dbReference>
<dbReference type="GO" id="GO:0016301">
    <property type="term" value="F:kinase activity"/>
    <property type="evidence" value="ECO:0007669"/>
    <property type="project" value="UniProtKB-KW"/>
</dbReference>
<dbReference type="GO" id="GO:0016773">
    <property type="term" value="F:phosphotransferase activity, alcohol group as acceptor"/>
    <property type="evidence" value="ECO:0007669"/>
    <property type="project" value="UniProtKB-UniRule"/>
</dbReference>
<dbReference type="GO" id="GO:0097175">
    <property type="term" value="P:1,6-anhydro-N-acetyl-beta-muramic acid catabolic process"/>
    <property type="evidence" value="ECO:0007669"/>
    <property type="project" value="UniProtKB-UniRule"/>
</dbReference>
<dbReference type="GO" id="GO:0006040">
    <property type="term" value="P:amino sugar metabolic process"/>
    <property type="evidence" value="ECO:0007669"/>
    <property type="project" value="InterPro"/>
</dbReference>
<dbReference type="GO" id="GO:0009254">
    <property type="term" value="P:peptidoglycan turnover"/>
    <property type="evidence" value="ECO:0007669"/>
    <property type="project" value="UniProtKB-UniRule"/>
</dbReference>
<dbReference type="CDD" id="cd24050">
    <property type="entry name" value="ASKHA_NBD_ANMK"/>
    <property type="match status" value="1"/>
</dbReference>
<dbReference type="FunFam" id="3.30.420.40:FF:000090">
    <property type="entry name" value="Anhydro-N-acetylmuramic acid kinase"/>
    <property type="match status" value="1"/>
</dbReference>
<dbReference type="Gene3D" id="3.30.420.40">
    <property type="match status" value="2"/>
</dbReference>
<dbReference type="HAMAP" id="MF_01270">
    <property type="entry name" value="AnhMurNAc_kinase"/>
    <property type="match status" value="1"/>
</dbReference>
<dbReference type="InterPro" id="IPR005338">
    <property type="entry name" value="Anhydro_N_Ac-Mur_kinase"/>
</dbReference>
<dbReference type="InterPro" id="IPR043129">
    <property type="entry name" value="ATPase_NBD"/>
</dbReference>
<dbReference type="NCBIfam" id="NF007138">
    <property type="entry name" value="PRK09585.1-1"/>
    <property type="match status" value="1"/>
</dbReference>
<dbReference type="NCBIfam" id="NF007139">
    <property type="entry name" value="PRK09585.1-3"/>
    <property type="match status" value="1"/>
</dbReference>
<dbReference type="NCBIfam" id="NF007148">
    <property type="entry name" value="PRK09585.3-2"/>
    <property type="match status" value="1"/>
</dbReference>
<dbReference type="PANTHER" id="PTHR30605">
    <property type="entry name" value="ANHYDRO-N-ACETYLMURAMIC ACID KINASE"/>
    <property type="match status" value="1"/>
</dbReference>
<dbReference type="PANTHER" id="PTHR30605:SF0">
    <property type="entry name" value="ANHYDRO-N-ACETYLMURAMIC ACID KINASE"/>
    <property type="match status" value="1"/>
</dbReference>
<dbReference type="Pfam" id="PF03702">
    <property type="entry name" value="AnmK"/>
    <property type="match status" value="1"/>
</dbReference>
<dbReference type="SUPFAM" id="SSF53067">
    <property type="entry name" value="Actin-like ATPase domain"/>
    <property type="match status" value="1"/>
</dbReference>
<name>ANMK_ECO57</name>
<keyword id="KW-0067">ATP-binding</keyword>
<keyword id="KW-0119">Carbohydrate metabolism</keyword>
<keyword id="KW-0418">Kinase</keyword>
<keyword id="KW-0547">Nucleotide-binding</keyword>
<keyword id="KW-1185">Reference proteome</keyword>
<keyword id="KW-0808">Transferase</keyword>
<accession>Q8X644</accession>
<accession>Q7ADK3</accession>
<gene>
    <name evidence="1" type="primary">anmK</name>
    <name type="ordered locus">Z2654</name>
    <name type="ordered locus">ECs2349</name>
</gene>
<sequence length="369" mass="39528">MKSGRFIGVMSGTSLDGVDVVLATIDEHRVAQLASLSWPIPVSLKQAVLDICQGQQLTLSQFGQLDTQLGRLFADAVKALLKEQNLQARDIVAIGCHGQTVWHEPTGVAPHTLQIGDNNQIVARTGITVVGDFRRRDIALGGQGAPLVPAFHHALLAHPTERRMVLNIGGIANLSLLIPGQPVGGYDTGPGNMLMDAWIWRQAGKPYDKDAEWARAGKVILPLLQNMLSDPYFSQPAPKSTGREYFNYGWLERHLRHFPGVDPRDVQATLAELTAVTISEQVLLSGGCERLMVCGGGSRNPLLMARLAALLPGTEVTTTDAVGISGDDMEALAFAWLAWRTLAGLPGNLPSVTGASQETVLGAIFPANS</sequence>
<reference key="1">
    <citation type="journal article" date="2001" name="Nature">
        <title>Genome sequence of enterohaemorrhagic Escherichia coli O157:H7.</title>
        <authorList>
            <person name="Perna N.T."/>
            <person name="Plunkett G. III"/>
            <person name="Burland V."/>
            <person name="Mau B."/>
            <person name="Glasner J.D."/>
            <person name="Rose D.J."/>
            <person name="Mayhew G.F."/>
            <person name="Evans P.S."/>
            <person name="Gregor J."/>
            <person name="Kirkpatrick H.A."/>
            <person name="Posfai G."/>
            <person name="Hackett J."/>
            <person name="Klink S."/>
            <person name="Boutin A."/>
            <person name="Shao Y."/>
            <person name="Miller L."/>
            <person name="Grotbeck E.J."/>
            <person name="Davis N.W."/>
            <person name="Lim A."/>
            <person name="Dimalanta E.T."/>
            <person name="Potamousis K."/>
            <person name="Apodaca J."/>
            <person name="Anantharaman T.S."/>
            <person name="Lin J."/>
            <person name="Yen G."/>
            <person name="Schwartz D.C."/>
            <person name="Welch R.A."/>
            <person name="Blattner F.R."/>
        </authorList>
    </citation>
    <scope>NUCLEOTIDE SEQUENCE [LARGE SCALE GENOMIC DNA]</scope>
    <source>
        <strain>O157:H7 / EDL933 / ATCC 700927 / EHEC</strain>
    </source>
</reference>
<reference key="2">
    <citation type="journal article" date="2001" name="DNA Res.">
        <title>Complete genome sequence of enterohemorrhagic Escherichia coli O157:H7 and genomic comparison with a laboratory strain K-12.</title>
        <authorList>
            <person name="Hayashi T."/>
            <person name="Makino K."/>
            <person name="Ohnishi M."/>
            <person name="Kurokawa K."/>
            <person name="Ishii K."/>
            <person name="Yokoyama K."/>
            <person name="Han C.-G."/>
            <person name="Ohtsubo E."/>
            <person name="Nakayama K."/>
            <person name="Murata T."/>
            <person name="Tanaka M."/>
            <person name="Tobe T."/>
            <person name="Iida T."/>
            <person name="Takami H."/>
            <person name="Honda T."/>
            <person name="Sasakawa C."/>
            <person name="Ogasawara N."/>
            <person name="Yasunaga T."/>
            <person name="Kuhara S."/>
            <person name="Shiba T."/>
            <person name="Hattori M."/>
            <person name="Shinagawa H."/>
        </authorList>
    </citation>
    <scope>NUCLEOTIDE SEQUENCE [LARGE SCALE GENOMIC DNA]</scope>
    <source>
        <strain>O157:H7 / Sakai / RIMD 0509952 / EHEC</strain>
    </source>
</reference>
<proteinExistence type="inferred from homology"/>
<protein>
    <recommendedName>
        <fullName evidence="1">Anhydro-N-acetylmuramic acid kinase</fullName>
        <ecNumber evidence="1">2.7.1.170</ecNumber>
    </recommendedName>
    <alternativeName>
        <fullName evidence="1">AnhMurNAc kinase</fullName>
    </alternativeName>
</protein>
<evidence type="ECO:0000255" key="1">
    <source>
        <dbReference type="HAMAP-Rule" id="MF_01270"/>
    </source>
</evidence>
<organism>
    <name type="scientific">Escherichia coli O157:H7</name>
    <dbReference type="NCBI Taxonomy" id="83334"/>
    <lineage>
        <taxon>Bacteria</taxon>
        <taxon>Pseudomonadati</taxon>
        <taxon>Pseudomonadota</taxon>
        <taxon>Gammaproteobacteria</taxon>
        <taxon>Enterobacterales</taxon>
        <taxon>Enterobacteriaceae</taxon>
        <taxon>Escherichia</taxon>
    </lineage>
</organism>
<feature type="chain" id="PRO_0000249999" description="Anhydro-N-acetylmuramic acid kinase">
    <location>
        <begin position="1"/>
        <end position="369"/>
    </location>
</feature>
<feature type="binding site" evidence="1">
    <location>
        <begin position="12"/>
        <end position="19"/>
    </location>
    <ligand>
        <name>ATP</name>
        <dbReference type="ChEBI" id="CHEBI:30616"/>
    </ligand>
</feature>